<organism>
    <name type="scientific">Listeria monocytogenes serotype 4b (strain CLIP80459)</name>
    <dbReference type="NCBI Taxonomy" id="568819"/>
    <lineage>
        <taxon>Bacteria</taxon>
        <taxon>Bacillati</taxon>
        <taxon>Bacillota</taxon>
        <taxon>Bacilli</taxon>
        <taxon>Bacillales</taxon>
        <taxon>Listeriaceae</taxon>
        <taxon>Listeria</taxon>
    </lineage>
</organism>
<dbReference type="EMBL" id="FM242711">
    <property type="protein sequence ID" value="CAS06345.1"/>
    <property type="molecule type" value="Genomic_DNA"/>
</dbReference>
<dbReference type="RefSeq" id="WP_003720942.1">
    <property type="nucleotide sequence ID" value="NC_012488.1"/>
</dbReference>
<dbReference type="SMR" id="C1KZH2"/>
<dbReference type="GeneID" id="93240505"/>
<dbReference type="KEGG" id="lmc:Lm4b_02591"/>
<dbReference type="HOGENOM" id="CLU_158491_5_2_9"/>
<dbReference type="GO" id="GO:0022625">
    <property type="term" value="C:cytosolic large ribosomal subunit"/>
    <property type="evidence" value="ECO:0007669"/>
    <property type="project" value="TreeGrafter"/>
</dbReference>
<dbReference type="GO" id="GO:0003735">
    <property type="term" value="F:structural constituent of ribosome"/>
    <property type="evidence" value="ECO:0007669"/>
    <property type="project" value="InterPro"/>
</dbReference>
<dbReference type="GO" id="GO:0006412">
    <property type="term" value="P:translation"/>
    <property type="evidence" value="ECO:0007669"/>
    <property type="project" value="UniProtKB-UniRule"/>
</dbReference>
<dbReference type="CDD" id="cd00427">
    <property type="entry name" value="Ribosomal_L29_HIP"/>
    <property type="match status" value="1"/>
</dbReference>
<dbReference type="FunFam" id="1.10.287.310:FF:000001">
    <property type="entry name" value="50S ribosomal protein L29"/>
    <property type="match status" value="1"/>
</dbReference>
<dbReference type="Gene3D" id="1.10.287.310">
    <property type="match status" value="1"/>
</dbReference>
<dbReference type="HAMAP" id="MF_00374">
    <property type="entry name" value="Ribosomal_uL29"/>
    <property type="match status" value="1"/>
</dbReference>
<dbReference type="InterPro" id="IPR050063">
    <property type="entry name" value="Ribosomal_protein_uL29"/>
</dbReference>
<dbReference type="InterPro" id="IPR001854">
    <property type="entry name" value="Ribosomal_uL29"/>
</dbReference>
<dbReference type="InterPro" id="IPR018254">
    <property type="entry name" value="Ribosomal_uL29_CS"/>
</dbReference>
<dbReference type="InterPro" id="IPR036049">
    <property type="entry name" value="Ribosomal_uL29_sf"/>
</dbReference>
<dbReference type="NCBIfam" id="TIGR00012">
    <property type="entry name" value="L29"/>
    <property type="match status" value="1"/>
</dbReference>
<dbReference type="PANTHER" id="PTHR10916">
    <property type="entry name" value="60S RIBOSOMAL PROTEIN L35/50S RIBOSOMAL PROTEIN L29"/>
    <property type="match status" value="1"/>
</dbReference>
<dbReference type="PANTHER" id="PTHR10916:SF0">
    <property type="entry name" value="LARGE RIBOSOMAL SUBUNIT PROTEIN UL29C"/>
    <property type="match status" value="1"/>
</dbReference>
<dbReference type="Pfam" id="PF00831">
    <property type="entry name" value="Ribosomal_L29"/>
    <property type="match status" value="1"/>
</dbReference>
<dbReference type="SUPFAM" id="SSF46561">
    <property type="entry name" value="Ribosomal protein L29 (L29p)"/>
    <property type="match status" value="1"/>
</dbReference>
<dbReference type="PROSITE" id="PS00579">
    <property type="entry name" value="RIBOSOMAL_L29"/>
    <property type="match status" value="1"/>
</dbReference>
<reference key="1">
    <citation type="journal article" date="2012" name="BMC Genomics">
        <title>Comparative genomics and transcriptomics of lineages I, II, and III strains of Listeria monocytogenes.</title>
        <authorList>
            <person name="Hain T."/>
            <person name="Ghai R."/>
            <person name="Billion A."/>
            <person name="Kuenne C.T."/>
            <person name="Steinweg C."/>
            <person name="Izar B."/>
            <person name="Mohamed W."/>
            <person name="Mraheil M."/>
            <person name="Domann E."/>
            <person name="Schaffrath S."/>
            <person name="Karst U."/>
            <person name="Goesmann A."/>
            <person name="Oehm S."/>
            <person name="Puhler A."/>
            <person name="Merkl R."/>
            <person name="Vorwerk S."/>
            <person name="Glaser P."/>
            <person name="Garrido P."/>
            <person name="Rusniok C."/>
            <person name="Buchrieser C."/>
            <person name="Goebel W."/>
            <person name="Chakraborty T."/>
        </authorList>
    </citation>
    <scope>NUCLEOTIDE SEQUENCE [LARGE SCALE GENOMIC DNA]</scope>
    <source>
        <strain>CLIP80459</strain>
    </source>
</reference>
<comment type="similarity">
    <text evidence="1">Belongs to the universal ribosomal protein uL29 family.</text>
</comment>
<protein>
    <recommendedName>
        <fullName evidence="1">Large ribosomal subunit protein uL29</fullName>
    </recommendedName>
    <alternativeName>
        <fullName evidence="2">50S ribosomal protein L29</fullName>
    </alternativeName>
</protein>
<proteinExistence type="inferred from homology"/>
<sequence>MKANDIRDLSTTEIQDQEKALKEELFNLRFQLATGQLENTARIREVRKAIARMKTIVRERELA</sequence>
<accession>C1KZH2</accession>
<evidence type="ECO:0000255" key="1">
    <source>
        <dbReference type="HAMAP-Rule" id="MF_00374"/>
    </source>
</evidence>
<evidence type="ECO:0000305" key="2"/>
<feature type="chain" id="PRO_1000205632" description="Large ribosomal subunit protein uL29">
    <location>
        <begin position="1"/>
        <end position="63"/>
    </location>
</feature>
<gene>
    <name evidence="1" type="primary">rpmC</name>
    <name type="ordered locus">Lm4b_02591</name>
</gene>
<name>RL29_LISMC</name>
<keyword id="KW-0687">Ribonucleoprotein</keyword>
<keyword id="KW-0689">Ribosomal protein</keyword>